<protein>
    <recommendedName>
        <fullName>Erlin-2-A</fullName>
    </recommendedName>
    <alternativeName>
        <fullName>Endoplasmic reticulum lipid raft-associated protein 2-A</fullName>
    </alternativeName>
    <alternativeName>
        <fullName>Stomatin-prohibitin-flotillin-HflC/K domain-containing protein 2-A</fullName>
        <shortName>SPFH domain-containing protein 2-A</shortName>
    </alternativeName>
</protein>
<gene>
    <name type="primary">erlin2-a</name>
    <name type="synonym">spfh2-a</name>
</gene>
<organism>
    <name type="scientific">Xenopus laevis</name>
    <name type="common">African clawed frog</name>
    <dbReference type="NCBI Taxonomy" id="8355"/>
    <lineage>
        <taxon>Eukaryota</taxon>
        <taxon>Metazoa</taxon>
        <taxon>Chordata</taxon>
        <taxon>Craniata</taxon>
        <taxon>Vertebrata</taxon>
        <taxon>Euteleostomi</taxon>
        <taxon>Amphibia</taxon>
        <taxon>Batrachia</taxon>
        <taxon>Anura</taxon>
        <taxon>Pipoidea</taxon>
        <taxon>Pipidae</taxon>
        <taxon>Xenopodinae</taxon>
        <taxon>Xenopus</taxon>
        <taxon>Xenopus</taxon>
    </lineage>
</organism>
<sequence length="335" mass="37292">MSHAGAIVGLGVALIAAALFSAIHKIEEGHVGVYYRGGALLSTTSGPGFHLMFPFITSFKSVQSTLQTDEIKNVPCGTSGGVMIYFDRIEVVNYLISSAVYDIVKNFTADYDKALIFNKIHHELNQFCSVHNLQEVYIELFDQIDENLKLALQEDLNLMAPGIIIQAVRVTKPKIPEAIGRNFELMEGEKTKLLIAAQKQKVVEKEAETERKKAIIEAEKVAQVAQIKYKQKVMEKETEKKISEIEDFAFVAREKARADAEYYTAHKVAEANRLKLTPEYLQLVKYQAIAANSKIYFGQDIPNMFMDSSAGPRVQSATVFQDDSLGLDEAASAEE</sequence>
<proteinExistence type="evidence at transcript level"/>
<name>ERL2A_XENLA</name>
<feature type="chain" id="PRO_0000378628" description="Erlin-2-A">
    <location>
        <begin position="1"/>
        <end position="335"/>
    </location>
</feature>
<feature type="topological domain" description="Cytoplasmic" evidence="2">
    <location>
        <begin position="1"/>
        <end position="2"/>
    </location>
</feature>
<feature type="transmembrane region" description="Helical" evidence="2">
    <location>
        <begin position="3"/>
        <end position="23"/>
    </location>
</feature>
<feature type="topological domain" description="Lumenal" evidence="2">
    <location>
        <begin position="24"/>
        <end position="335"/>
    </location>
</feature>
<feature type="glycosylation site" description="N-linked (GlcNAc...) asparagine" evidence="2">
    <location>
        <position position="106"/>
    </location>
</feature>
<accession>Q5XH03</accession>
<dbReference type="EMBL" id="BC084273">
    <property type="protein sequence ID" value="AAH84273.1"/>
    <property type="molecule type" value="mRNA"/>
</dbReference>
<dbReference type="RefSeq" id="NP_001088269.1">
    <property type="nucleotide sequence ID" value="NM_001094800.1"/>
</dbReference>
<dbReference type="SMR" id="Q5XH03"/>
<dbReference type="BioGRID" id="105180">
    <property type="interactions" value="1"/>
</dbReference>
<dbReference type="GlyCosmos" id="Q5XH03">
    <property type="glycosylation" value="1 site, No reported glycans"/>
</dbReference>
<dbReference type="DNASU" id="495100"/>
<dbReference type="GeneID" id="495100"/>
<dbReference type="KEGG" id="xla:495100"/>
<dbReference type="AGR" id="Xenbase:XB-GENE-950149"/>
<dbReference type="CTD" id="495100"/>
<dbReference type="Xenbase" id="XB-GENE-950149">
    <property type="gene designation" value="erlin2.L"/>
</dbReference>
<dbReference type="OrthoDB" id="77368at2759"/>
<dbReference type="Proteomes" id="UP000186698">
    <property type="component" value="Chromosome 3L"/>
</dbReference>
<dbReference type="Bgee" id="495100">
    <property type="expression patterns" value="Expressed in blastula and 19 other cell types or tissues"/>
</dbReference>
<dbReference type="GO" id="GO:0005789">
    <property type="term" value="C:endoplasmic reticulum membrane"/>
    <property type="evidence" value="ECO:0000318"/>
    <property type="project" value="GO_Central"/>
</dbReference>
<dbReference type="GO" id="GO:0015485">
    <property type="term" value="F:cholesterol binding"/>
    <property type="evidence" value="ECO:0000318"/>
    <property type="project" value="GO_Central"/>
</dbReference>
<dbReference type="GO" id="GO:0031625">
    <property type="term" value="F:ubiquitin protein ligase binding"/>
    <property type="evidence" value="ECO:0007669"/>
    <property type="project" value="InterPro"/>
</dbReference>
<dbReference type="GO" id="GO:0008203">
    <property type="term" value="P:cholesterol metabolic process"/>
    <property type="evidence" value="ECO:0007669"/>
    <property type="project" value="UniProtKB-KW"/>
</dbReference>
<dbReference type="GO" id="GO:0032933">
    <property type="term" value="P:SREBP signaling pathway"/>
    <property type="evidence" value="ECO:0000318"/>
    <property type="project" value="GO_Central"/>
</dbReference>
<dbReference type="CDD" id="cd03406">
    <property type="entry name" value="SPFH_like_u3"/>
    <property type="match status" value="1"/>
</dbReference>
<dbReference type="InterPro" id="IPR001107">
    <property type="entry name" value="Band_7"/>
</dbReference>
<dbReference type="InterPro" id="IPR033294">
    <property type="entry name" value="Erlin1/2"/>
</dbReference>
<dbReference type="PANTHER" id="PTHR15351">
    <property type="entry name" value="ERLIN (ER LIPID RAFT ASSOCIATED PROTEIN) HOMOLOG"/>
    <property type="match status" value="1"/>
</dbReference>
<dbReference type="PANTHER" id="PTHR15351:SF4">
    <property type="entry name" value="ERLIN-2"/>
    <property type="match status" value="1"/>
</dbReference>
<dbReference type="Pfam" id="PF01145">
    <property type="entry name" value="Band_7"/>
    <property type="match status" value="1"/>
</dbReference>
<dbReference type="SMART" id="SM00244">
    <property type="entry name" value="PHB"/>
    <property type="match status" value="1"/>
</dbReference>
<evidence type="ECO:0000250" key="1">
    <source>
        <dbReference type="UniProtKB" id="O94905"/>
    </source>
</evidence>
<evidence type="ECO:0000255" key="2"/>
<evidence type="ECO:0000312" key="3">
    <source>
        <dbReference type="EMBL" id="AAH84273.1"/>
    </source>
</evidence>
<keyword id="KW-0153">Cholesterol metabolism</keyword>
<keyword id="KW-0256">Endoplasmic reticulum</keyword>
<keyword id="KW-0325">Glycoprotein</keyword>
<keyword id="KW-0443">Lipid metabolism</keyword>
<keyword id="KW-0472">Membrane</keyword>
<keyword id="KW-1185">Reference proteome</keyword>
<keyword id="KW-0735">Signal-anchor</keyword>
<keyword id="KW-0753">Steroid metabolism</keyword>
<keyword id="KW-1207">Sterol metabolism</keyword>
<keyword id="KW-0812">Transmembrane</keyword>
<keyword id="KW-1133">Transmembrane helix</keyword>
<reference evidence="3" key="1">
    <citation type="submission" date="2004-10" db="EMBL/GenBank/DDBJ databases">
        <authorList>
            <consortium name="NIH - Xenopus Gene Collection (XGC) project"/>
        </authorList>
    </citation>
    <scope>NUCLEOTIDE SEQUENCE [LARGE SCALE MRNA]</scope>
    <source>
        <tissue evidence="3">Kidney</tissue>
    </source>
</reference>
<comment type="function">
    <text evidence="1">Mediates the endoplasmic reticulum-associated degradation (ERAD) of inositol 1,4,5-trisphosphate receptors (IP3Rs). Promotes sterol-accelerated ERAD of HMGCR. Involved in regulation of cellular cholesterol homeostasis by regulation the SREBP signaling pathway (By similarity).</text>
</comment>
<comment type="subcellular location">
    <subcellularLocation>
        <location evidence="1 2">Endoplasmic reticulum membrane</location>
        <topology evidence="1 2">Single-pass type II membrane protein</topology>
    </subcellularLocation>
    <text evidence="1 2">Associated with lipid raft-like domains of the endoplasmic reticulum membrane.</text>
</comment>
<comment type="similarity">
    <text evidence="2">Belongs to the band 7/mec-2 family.</text>
</comment>